<feature type="chain" id="PRO_0000160141" description="Glucosamine-6-phosphate deaminase">
    <location>
        <begin position="1"/>
        <end position="253"/>
    </location>
</feature>
<feature type="active site" description="Proton acceptor; for enolization step" evidence="1">
    <location>
        <position position="65"/>
    </location>
</feature>
<feature type="active site" description="For ring-opening step" evidence="1">
    <location>
        <position position="133"/>
    </location>
</feature>
<feature type="active site" description="Proton acceptor; for ring-opening step" evidence="1">
    <location>
        <position position="135"/>
    </location>
</feature>
<feature type="active site" description="For ring-opening step" evidence="1">
    <location>
        <position position="140"/>
    </location>
</feature>
<keyword id="KW-0119">Carbohydrate metabolism</keyword>
<keyword id="KW-0378">Hydrolase</keyword>
<keyword id="KW-1185">Reference proteome</keyword>
<sequence length="253" mass="27694">MDIIIRADAQEVGKEAAAIMAPFIKQGRTIGLATGSSPLTTYRELIRMYESGELTFKTIQAFLLDEYVGLARDDKNSYFRTIRDEFTAHVDFVDANVHSPDSTDPDPYHAAALYEQKIIDTGVAIQLLGVGVNGHIGFNEPTSALQGPTKVQALHPQTIKDNARFFNDCIENVPTHAMTQGLGTITRAENIIMVATGEAKADAIHRIVEGPLTALCPGSVLQLHADVTIVVDEAAASKLEHADYYRTMERIRL</sequence>
<evidence type="ECO:0000255" key="1">
    <source>
        <dbReference type="HAMAP-Rule" id="MF_01241"/>
    </source>
</evidence>
<evidence type="ECO:0000305" key="2"/>
<protein>
    <recommendedName>
        <fullName evidence="1">Glucosamine-6-phosphate deaminase</fullName>
        <ecNumber evidence="1">3.5.99.6</ecNumber>
    </recommendedName>
    <alternativeName>
        <fullName evidence="1">GlcN6P deaminase</fullName>
        <shortName evidence="1">GNPDA</shortName>
    </alternativeName>
    <alternativeName>
        <fullName evidence="1">Glucosamine-6-phosphate isomerase</fullName>
    </alternativeName>
</protein>
<organism>
    <name type="scientific">Corynebacterium efficiens (strain DSM 44549 / YS-314 / AJ 12310 / JCM 11189 / NBRC 100395)</name>
    <dbReference type="NCBI Taxonomy" id="196164"/>
    <lineage>
        <taxon>Bacteria</taxon>
        <taxon>Bacillati</taxon>
        <taxon>Actinomycetota</taxon>
        <taxon>Actinomycetes</taxon>
        <taxon>Mycobacteriales</taxon>
        <taxon>Corynebacteriaceae</taxon>
        <taxon>Corynebacterium</taxon>
    </lineage>
</organism>
<reference key="1">
    <citation type="journal article" date="2003" name="Genome Res.">
        <title>Comparative complete genome sequence analysis of the amino acid replacements responsible for the thermostability of Corynebacterium efficiens.</title>
        <authorList>
            <person name="Nishio Y."/>
            <person name="Nakamura Y."/>
            <person name="Kawarabayasi Y."/>
            <person name="Usuda Y."/>
            <person name="Kimura E."/>
            <person name="Sugimoto S."/>
            <person name="Matsui K."/>
            <person name="Yamagishi A."/>
            <person name="Kikuchi H."/>
            <person name="Ikeo K."/>
            <person name="Gojobori T."/>
        </authorList>
    </citation>
    <scope>NUCLEOTIDE SEQUENCE [LARGE SCALE GENOMIC DNA]</scope>
    <source>
        <strain>DSM 44549 / YS-314 / AJ 12310 / JCM 11189 / NBRC 100395</strain>
    </source>
</reference>
<gene>
    <name evidence="1" type="primary">nagB</name>
    <name type="ordered locus">CE2518</name>
</gene>
<comment type="function">
    <text evidence="1">Catalyzes the reversible isomerization-deamination of glucosamine 6-phosphate (GlcN6P) to form fructose 6-phosphate (Fru6P) and ammonium ion.</text>
</comment>
<comment type="catalytic activity">
    <reaction evidence="1">
        <text>alpha-D-glucosamine 6-phosphate + H2O = beta-D-fructose 6-phosphate + NH4(+)</text>
        <dbReference type="Rhea" id="RHEA:12172"/>
        <dbReference type="ChEBI" id="CHEBI:15377"/>
        <dbReference type="ChEBI" id="CHEBI:28938"/>
        <dbReference type="ChEBI" id="CHEBI:57634"/>
        <dbReference type="ChEBI" id="CHEBI:75989"/>
        <dbReference type="EC" id="3.5.99.6"/>
    </reaction>
</comment>
<comment type="pathway">
    <text evidence="1">Amino-sugar metabolism; N-acetylneuraminate degradation; D-fructose 6-phosphate from N-acetylneuraminate: step 5/5.</text>
</comment>
<comment type="similarity">
    <text evidence="1">Belongs to the glucosamine/galactosamine-6-phosphate isomerase family. NagB subfamily.</text>
</comment>
<comment type="sequence caution" evidence="2">
    <conflict type="erroneous initiation">
        <sequence resource="EMBL-CDS" id="BAC19328"/>
    </conflict>
</comment>
<accession>Q8FMI6</accession>
<proteinExistence type="inferred from homology"/>
<dbReference type="EC" id="3.5.99.6" evidence="1"/>
<dbReference type="EMBL" id="BA000035">
    <property type="protein sequence ID" value="BAC19328.1"/>
    <property type="status" value="ALT_INIT"/>
    <property type="molecule type" value="Genomic_DNA"/>
</dbReference>
<dbReference type="RefSeq" id="WP_035109340.1">
    <property type="nucleotide sequence ID" value="NC_004369.1"/>
</dbReference>
<dbReference type="SMR" id="Q8FMI6"/>
<dbReference type="STRING" id="196164.gene:10742965"/>
<dbReference type="KEGG" id="cef:CE2518"/>
<dbReference type="eggNOG" id="COG0363">
    <property type="taxonomic scope" value="Bacteria"/>
</dbReference>
<dbReference type="HOGENOM" id="CLU_049611_1_1_11"/>
<dbReference type="UniPathway" id="UPA00629">
    <property type="reaction ID" value="UER00684"/>
</dbReference>
<dbReference type="Proteomes" id="UP000001409">
    <property type="component" value="Chromosome"/>
</dbReference>
<dbReference type="GO" id="GO:0005737">
    <property type="term" value="C:cytoplasm"/>
    <property type="evidence" value="ECO:0007669"/>
    <property type="project" value="TreeGrafter"/>
</dbReference>
<dbReference type="GO" id="GO:0004342">
    <property type="term" value="F:glucosamine-6-phosphate deaminase activity"/>
    <property type="evidence" value="ECO:0007669"/>
    <property type="project" value="UniProtKB-UniRule"/>
</dbReference>
<dbReference type="GO" id="GO:0042802">
    <property type="term" value="F:identical protein binding"/>
    <property type="evidence" value="ECO:0007669"/>
    <property type="project" value="TreeGrafter"/>
</dbReference>
<dbReference type="GO" id="GO:0005975">
    <property type="term" value="P:carbohydrate metabolic process"/>
    <property type="evidence" value="ECO:0007669"/>
    <property type="project" value="InterPro"/>
</dbReference>
<dbReference type="GO" id="GO:0006043">
    <property type="term" value="P:glucosamine catabolic process"/>
    <property type="evidence" value="ECO:0007669"/>
    <property type="project" value="TreeGrafter"/>
</dbReference>
<dbReference type="GO" id="GO:0006046">
    <property type="term" value="P:N-acetylglucosamine catabolic process"/>
    <property type="evidence" value="ECO:0007669"/>
    <property type="project" value="TreeGrafter"/>
</dbReference>
<dbReference type="GO" id="GO:0019262">
    <property type="term" value="P:N-acetylneuraminate catabolic process"/>
    <property type="evidence" value="ECO:0007669"/>
    <property type="project" value="UniProtKB-UniRule"/>
</dbReference>
<dbReference type="CDD" id="cd01399">
    <property type="entry name" value="GlcN6P_deaminase"/>
    <property type="match status" value="1"/>
</dbReference>
<dbReference type="Gene3D" id="3.40.50.1360">
    <property type="match status" value="1"/>
</dbReference>
<dbReference type="HAMAP" id="MF_01241">
    <property type="entry name" value="GlcN6P_deamin"/>
    <property type="match status" value="1"/>
</dbReference>
<dbReference type="InterPro" id="IPR006148">
    <property type="entry name" value="Glc/Gal-6P_isomerase"/>
</dbReference>
<dbReference type="InterPro" id="IPR004547">
    <property type="entry name" value="Glucosamine6P_isomerase"/>
</dbReference>
<dbReference type="InterPro" id="IPR018321">
    <property type="entry name" value="Glucosamine6P_isomerase_CS"/>
</dbReference>
<dbReference type="InterPro" id="IPR037171">
    <property type="entry name" value="NagB/RpiA_transferase-like"/>
</dbReference>
<dbReference type="PANTHER" id="PTHR11280">
    <property type="entry name" value="GLUCOSAMINE-6-PHOSPHATE ISOMERASE"/>
    <property type="match status" value="1"/>
</dbReference>
<dbReference type="PANTHER" id="PTHR11280:SF5">
    <property type="entry name" value="GLUCOSAMINE-6-PHOSPHATE ISOMERASE"/>
    <property type="match status" value="1"/>
</dbReference>
<dbReference type="Pfam" id="PF01182">
    <property type="entry name" value="Glucosamine_iso"/>
    <property type="match status" value="1"/>
</dbReference>
<dbReference type="SUPFAM" id="SSF100950">
    <property type="entry name" value="NagB/RpiA/CoA transferase-like"/>
    <property type="match status" value="1"/>
</dbReference>
<dbReference type="PROSITE" id="PS01161">
    <property type="entry name" value="GLC_GALNAC_ISOMERASE"/>
    <property type="match status" value="1"/>
</dbReference>
<name>NAGB_COREF</name>